<keyword id="KW-0378">Hydrolase</keyword>
<keyword id="KW-0452">Lithium</keyword>
<keyword id="KW-0460">Magnesium</keyword>
<keyword id="KW-0479">Metal-binding</keyword>
<keyword id="KW-1185">Reference proteome</keyword>
<comment type="function">
    <text evidence="2">Phosphatase that converts 3'(2')-phosphoadenosine 5'-phosphate (PAP) to AMP and adenosine 3'-phosphate 5'-phosphosulfate (PAPS) to adenosine 5'-phosphosulfate (APS). Is also able to hydrolyze inositol 1,4-bisphosphate (Ins(1,4)P2) and inositol 1,3,4-trisphosphate (Ins(1,3,4)P3), but is not active on AMP, 3'-AMP, fructose-1,6-bisphosphate, Ins(1)P, Ins(2)P and Ins(1,4,5)P3. Probably prevents the toxic accumulation of PAP, a compound which inhibits a variety of proteins, including PAPS-utilizing enzymes such as sulfotransferases, and RNA processing enzymes. Could also play a role in inositol recycling and phosphoinositide metabolism.</text>
</comment>
<comment type="catalytic activity">
    <reaction evidence="2">
        <text>adenosine 3',5'-bisphosphate + H2O = AMP + phosphate</text>
        <dbReference type="Rhea" id="RHEA:10040"/>
        <dbReference type="ChEBI" id="CHEBI:15377"/>
        <dbReference type="ChEBI" id="CHEBI:43474"/>
        <dbReference type="ChEBI" id="CHEBI:58343"/>
        <dbReference type="ChEBI" id="CHEBI:456215"/>
        <dbReference type="EC" id="3.1.3.7"/>
    </reaction>
    <physiologicalReaction direction="left-to-right" evidence="2">
        <dbReference type="Rhea" id="RHEA:10041"/>
    </physiologicalReaction>
</comment>
<comment type="catalytic activity">
    <reaction evidence="2">
        <text>adenosine 2',5'-bisphosphate + H2O = AMP + phosphate</text>
        <dbReference type="Rhea" id="RHEA:77643"/>
        <dbReference type="ChEBI" id="CHEBI:15377"/>
        <dbReference type="ChEBI" id="CHEBI:43474"/>
        <dbReference type="ChEBI" id="CHEBI:194156"/>
        <dbReference type="ChEBI" id="CHEBI:456215"/>
        <dbReference type="EC" id="3.1.3.7"/>
    </reaction>
    <physiologicalReaction direction="left-to-right" evidence="2">
        <dbReference type="Rhea" id="RHEA:77644"/>
    </physiologicalReaction>
</comment>
<comment type="catalytic activity">
    <reaction evidence="2">
        <text>3'-phosphoadenylyl sulfate + H2O = adenosine 5'-phosphosulfate + phosphate</text>
        <dbReference type="Rhea" id="RHEA:77639"/>
        <dbReference type="ChEBI" id="CHEBI:15377"/>
        <dbReference type="ChEBI" id="CHEBI:43474"/>
        <dbReference type="ChEBI" id="CHEBI:58243"/>
        <dbReference type="ChEBI" id="CHEBI:58339"/>
        <dbReference type="EC" id="3.1.3.7"/>
    </reaction>
    <physiologicalReaction direction="left-to-right" evidence="2">
        <dbReference type="Rhea" id="RHEA:77640"/>
    </physiologicalReaction>
</comment>
<comment type="catalytic activity">
    <reaction evidence="2">
        <text>1D-myo-inositol 1,4-bisphosphate + H2O = 1D-myo-inositol 4-phosphate + phosphate</text>
        <dbReference type="Rhea" id="RHEA:15553"/>
        <dbReference type="ChEBI" id="CHEBI:15377"/>
        <dbReference type="ChEBI" id="CHEBI:43474"/>
        <dbReference type="ChEBI" id="CHEBI:58282"/>
        <dbReference type="ChEBI" id="CHEBI:58469"/>
        <dbReference type="EC" id="3.1.3.57"/>
    </reaction>
    <physiologicalReaction direction="left-to-right" evidence="2">
        <dbReference type="Rhea" id="RHEA:15554"/>
    </physiologicalReaction>
</comment>
<comment type="catalytic activity">
    <reaction evidence="2">
        <text>1D-myo-inositol 1,3,4-trisphosphate + H2O = 1D-myo-inositol 3,4-bisphosphate + phosphate</text>
        <dbReference type="Rhea" id="RHEA:70319"/>
        <dbReference type="ChEBI" id="CHEBI:15377"/>
        <dbReference type="ChEBI" id="CHEBI:43474"/>
        <dbReference type="ChEBI" id="CHEBI:58414"/>
        <dbReference type="ChEBI" id="CHEBI:83241"/>
    </reaction>
    <physiologicalReaction direction="left-to-right" evidence="2">
        <dbReference type="Rhea" id="RHEA:70320"/>
    </physiologicalReaction>
</comment>
<comment type="cofactor">
    <cofactor evidence="2">
        <name>Mg(2+)</name>
        <dbReference type="ChEBI" id="CHEBI:18420"/>
    </cofactor>
    <text evidence="2">Binds 3 Mg(2+) ions per subunit.</text>
</comment>
<comment type="activity regulation">
    <text evidence="2">Inhibited by Li(+) and Ca(2+), but not by Na(+).</text>
</comment>
<comment type="similarity">
    <text evidence="3">Belongs to the inositol monophosphatase superfamily.</text>
</comment>
<feature type="initiator methionine" description="Removed" evidence="1">
    <location>
        <position position="1"/>
    </location>
</feature>
<feature type="chain" id="PRO_0000328596" description="3'(2'),5'-bisphosphate nucleotidase 1">
    <location>
        <begin position="2"/>
        <end position="311"/>
    </location>
</feature>
<feature type="active site" description="Proton acceptor" evidence="2">
    <location>
        <position position="49"/>
    </location>
</feature>
<feature type="active site" description="Proton acceptor" evidence="2">
    <location>
        <position position="121"/>
    </location>
</feature>
<feature type="binding site" evidence="2">
    <location>
        <position position="72"/>
    </location>
    <ligand>
        <name>Mg(2+)</name>
        <dbReference type="ChEBI" id="CHEBI:18420"/>
        <label>1</label>
    </ligand>
</feature>
<feature type="binding site" evidence="2">
    <location>
        <position position="72"/>
    </location>
    <ligand>
        <name>Mg(2+)</name>
        <dbReference type="ChEBI" id="CHEBI:18420"/>
        <label>3</label>
    </ligand>
</feature>
<feature type="binding site" evidence="2">
    <location>
        <position position="116"/>
    </location>
    <ligand>
        <name>Mg(2+)</name>
        <dbReference type="ChEBI" id="CHEBI:18420"/>
        <label>1</label>
    </ligand>
</feature>
<feature type="binding site" evidence="2">
    <location>
        <position position="116"/>
    </location>
    <ligand>
        <name>Mg(2+)</name>
        <dbReference type="ChEBI" id="CHEBI:18420"/>
        <label>2</label>
    </ligand>
</feature>
<feature type="binding site" evidence="2">
    <location>
        <position position="118"/>
    </location>
    <ligand>
        <name>Mg(2+)</name>
        <dbReference type="ChEBI" id="CHEBI:18420"/>
        <label>1</label>
    </ligand>
</feature>
<feature type="binding site" evidence="2">
    <location>
        <position position="119"/>
    </location>
    <ligand>
        <name>Mg(2+)</name>
        <dbReference type="ChEBI" id="CHEBI:18420"/>
        <label>2</label>
    </ligand>
</feature>
<feature type="binding site" evidence="2">
    <location>
        <position position="202"/>
    </location>
    <ligand>
        <name>AMP</name>
        <dbReference type="ChEBI" id="CHEBI:456215"/>
    </ligand>
</feature>
<feature type="binding site" evidence="2">
    <location>
        <position position="205"/>
    </location>
    <ligand>
        <name>AMP</name>
        <dbReference type="ChEBI" id="CHEBI:456215"/>
    </ligand>
</feature>
<feature type="binding site" evidence="2">
    <location>
        <position position="227"/>
    </location>
    <ligand>
        <name>AMP</name>
        <dbReference type="ChEBI" id="CHEBI:456215"/>
    </ligand>
</feature>
<feature type="binding site" evidence="2">
    <location>
        <position position="231"/>
    </location>
    <ligand>
        <name>AMP</name>
        <dbReference type="ChEBI" id="CHEBI:456215"/>
    </ligand>
</feature>
<feature type="binding site" evidence="2">
    <location>
        <position position="254"/>
    </location>
    <ligand>
        <name>Mg(2+)</name>
        <dbReference type="ChEBI" id="CHEBI:18420"/>
        <label>2</label>
    </ligand>
</feature>
<sequence>MSKTLNILELTSACIKLAQESGDIIRDVFKSGSLGIEMKSVDDPMTKADLLSQQHIIGSLRTIWSDIKIVGEEQCEIPTIDKKPPIDLLANDKDCIEKCPEEFKQLPIDDLIIFIDPLDATREFTLGRVGCVMTLIGISFKGKPIAGIIYQPFVDCNGDGTTDQSKWVGRTIWAIVGGGIPVKGIKDRRAPEDVGKVILTTTASHFNDKVQQAVDAIKPDKLLRAGGAGYKSLLVIENQADVYVFPTVGSKLWDICGPHAILLAVGGKLTDPQGNDIIYSTDPEKIENKNGIIITISNHQKYIDLLKNFKN</sequence>
<evidence type="ECO:0000250" key="1"/>
<evidence type="ECO:0000250" key="2">
    <source>
        <dbReference type="UniProtKB" id="Q9Z1N4"/>
    </source>
</evidence>
<evidence type="ECO:0000305" key="3"/>
<organism>
    <name type="scientific">Dictyostelium discoideum</name>
    <name type="common">Social amoeba</name>
    <dbReference type="NCBI Taxonomy" id="44689"/>
    <lineage>
        <taxon>Eukaryota</taxon>
        <taxon>Amoebozoa</taxon>
        <taxon>Evosea</taxon>
        <taxon>Eumycetozoa</taxon>
        <taxon>Dictyostelia</taxon>
        <taxon>Dictyosteliales</taxon>
        <taxon>Dictyosteliaceae</taxon>
        <taxon>Dictyostelium</taxon>
    </lineage>
</organism>
<gene>
    <name type="primary">bpnt1</name>
    <name type="ORF">DDB_G0275663</name>
</gene>
<reference key="1">
    <citation type="journal article" date="2002" name="Nature">
        <title>Sequence and analysis of chromosome 2 of Dictyostelium discoideum.</title>
        <authorList>
            <person name="Gloeckner G."/>
            <person name="Eichinger L."/>
            <person name="Szafranski K."/>
            <person name="Pachebat J.A."/>
            <person name="Bankier A.T."/>
            <person name="Dear P.H."/>
            <person name="Lehmann R."/>
            <person name="Baumgart C."/>
            <person name="Parra G."/>
            <person name="Abril J.F."/>
            <person name="Guigo R."/>
            <person name="Kumpf K."/>
            <person name="Tunggal B."/>
            <person name="Cox E.C."/>
            <person name="Quail M.A."/>
            <person name="Platzer M."/>
            <person name="Rosenthal A."/>
            <person name="Noegel A.A."/>
        </authorList>
    </citation>
    <scope>NUCLEOTIDE SEQUENCE [LARGE SCALE GENOMIC DNA]</scope>
    <source>
        <strain>AX4</strain>
    </source>
</reference>
<reference key="2">
    <citation type="journal article" date="2005" name="Nature">
        <title>The genome of the social amoeba Dictyostelium discoideum.</title>
        <authorList>
            <person name="Eichinger L."/>
            <person name="Pachebat J.A."/>
            <person name="Gloeckner G."/>
            <person name="Rajandream M.A."/>
            <person name="Sucgang R."/>
            <person name="Berriman M."/>
            <person name="Song J."/>
            <person name="Olsen R."/>
            <person name="Szafranski K."/>
            <person name="Xu Q."/>
            <person name="Tunggal B."/>
            <person name="Kummerfeld S."/>
            <person name="Madera M."/>
            <person name="Konfortov B.A."/>
            <person name="Rivero F."/>
            <person name="Bankier A.T."/>
            <person name="Lehmann R."/>
            <person name="Hamlin N."/>
            <person name="Davies R."/>
            <person name="Gaudet P."/>
            <person name="Fey P."/>
            <person name="Pilcher K."/>
            <person name="Chen G."/>
            <person name="Saunders D."/>
            <person name="Sodergren E.J."/>
            <person name="Davis P."/>
            <person name="Kerhornou A."/>
            <person name="Nie X."/>
            <person name="Hall N."/>
            <person name="Anjard C."/>
            <person name="Hemphill L."/>
            <person name="Bason N."/>
            <person name="Farbrother P."/>
            <person name="Desany B."/>
            <person name="Just E."/>
            <person name="Morio T."/>
            <person name="Rost R."/>
            <person name="Churcher C.M."/>
            <person name="Cooper J."/>
            <person name="Haydock S."/>
            <person name="van Driessche N."/>
            <person name="Cronin A."/>
            <person name="Goodhead I."/>
            <person name="Muzny D.M."/>
            <person name="Mourier T."/>
            <person name="Pain A."/>
            <person name="Lu M."/>
            <person name="Harper D."/>
            <person name="Lindsay R."/>
            <person name="Hauser H."/>
            <person name="James K.D."/>
            <person name="Quiles M."/>
            <person name="Madan Babu M."/>
            <person name="Saito T."/>
            <person name="Buchrieser C."/>
            <person name="Wardroper A."/>
            <person name="Felder M."/>
            <person name="Thangavelu M."/>
            <person name="Johnson D."/>
            <person name="Knights A."/>
            <person name="Loulseged H."/>
            <person name="Mungall K.L."/>
            <person name="Oliver K."/>
            <person name="Price C."/>
            <person name="Quail M.A."/>
            <person name="Urushihara H."/>
            <person name="Hernandez J."/>
            <person name="Rabbinowitsch E."/>
            <person name="Steffen D."/>
            <person name="Sanders M."/>
            <person name="Ma J."/>
            <person name="Kohara Y."/>
            <person name="Sharp S."/>
            <person name="Simmonds M.N."/>
            <person name="Spiegler S."/>
            <person name="Tivey A."/>
            <person name="Sugano S."/>
            <person name="White B."/>
            <person name="Walker D."/>
            <person name="Woodward J.R."/>
            <person name="Winckler T."/>
            <person name="Tanaka Y."/>
            <person name="Shaulsky G."/>
            <person name="Schleicher M."/>
            <person name="Weinstock G.M."/>
            <person name="Rosenthal A."/>
            <person name="Cox E.C."/>
            <person name="Chisholm R.L."/>
            <person name="Gibbs R.A."/>
            <person name="Loomis W.F."/>
            <person name="Platzer M."/>
            <person name="Kay R.R."/>
            <person name="Williams J.G."/>
            <person name="Dear P.H."/>
            <person name="Noegel A.A."/>
            <person name="Barrell B.G."/>
            <person name="Kuspa A."/>
        </authorList>
    </citation>
    <scope>NUCLEOTIDE SEQUENCE [LARGE SCALE GENOMIC DNA]</scope>
    <source>
        <strain>AX4</strain>
    </source>
</reference>
<proteinExistence type="inferred from homology"/>
<dbReference type="EC" id="3.1.3.7" evidence="2"/>
<dbReference type="EC" id="3.1.3.57" evidence="2"/>
<dbReference type="EMBL" id="AAFI02000013">
    <property type="protein sequence ID" value="EAL69582.1"/>
    <property type="molecule type" value="Genomic_DNA"/>
</dbReference>
<dbReference type="RefSeq" id="XP_643514.1">
    <property type="nucleotide sequence ID" value="XM_638422.1"/>
</dbReference>
<dbReference type="SMR" id="Q869K3"/>
<dbReference type="FunCoup" id="Q869K3">
    <property type="interactions" value="121"/>
</dbReference>
<dbReference type="STRING" id="44689.Q869K3"/>
<dbReference type="GlyGen" id="Q869K3">
    <property type="glycosylation" value="1 site"/>
</dbReference>
<dbReference type="PaxDb" id="44689-DDB0266708"/>
<dbReference type="EnsemblProtists" id="EAL69582">
    <property type="protein sequence ID" value="EAL69582"/>
    <property type="gene ID" value="DDB_G0275663"/>
</dbReference>
<dbReference type="GeneID" id="8620095"/>
<dbReference type="KEGG" id="ddi:DDB_G0275663"/>
<dbReference type="dictyBase" id="DDB_G0275663">
    <property type="gene designation" value="ippA"/>
</dbReference>
<dbReference type="VEuPathDB" id="AmoebaDB:DDB_G0275663"/>
<dbReference type="eggNOG" id="KOG3099">
    <property type="taxonomic scope" value="Eukaryota"/>
</dbReference>
<dbReference type="HOGENOM" id="CLU_034742_2_0_1"/>
<dbReference type="InParanoid" id="Q869K3"/>
<dbReference type="OMA" id="QTEADRC"/>
<dbReference type="PhylomeDB" id="Q869K3"/>
<dbReference type="Reactome" id="R-DDI-156584">
    <property type="pathway name" value="Cytosolic sulfonation of small molecules"/>
</dbReference>
<dbReference type="Reactome" id="R-DDI-1855183">
    <property type="pathway name" value="Synthesis of IP2, IP, and Ins in the cytosol"/>
</dbReference>
<dbReference type="PRO" id="PR:Q869K3"/>
<dbReference type="Proteomes" id="UP000002195">
    <property type="component" value="Chromosome 2"/>
</dbReference>
<dbReference type="GO" id="GO:0008441">
    <property type="term" value="F:3'(2'),5'-bisphosphate nucleotidase activity"/>
    <property type="evidence" value="ECO:0007669"/>
    <property type="project" value="UniProtKB-EC"/>
</dbReference>
<dbReference type="GO" id="GO:0004441">
    <property type="term" value="F:inositol-1,4-bisphosphate 1-phosphatase activity"/>
    <property type="evidence" value="ECO:0007669"/>
    <property type="project" value="RHEA"/>
</dbReference>
<dbReference type="GO" id="GO:0046872">
    <property type="term" value="F:metal ion binding"/>
    <property type="evidence" value="ECO:0007669"/>
    <property type="project" value="UniProtKB-KW"/>
</dbReference>
<dbReference type="GO" id="GO:0046854">
    <property type="term" value="P:phosphatidylinositol phosphate biosynthetic process"/>
    <property type="evidence" value="ECO:0007669"/>
    <property type="project" value="InterPro"/>
</dbReference>
<dbReference type="CDD" id="cd01640">
    <property type="entry name" value="IPPase"/>
    <property type="match status" value="1"/>
</dbReference>
<dbReference type="FunFam" id="3.40.190.80:FF:000006">
    <property type="entry name" value="Bisphosphate nucleotidase 1"/>
    <property type="match status" value="1"/>
</dbReference>
<dbReference type="FunFam" id="3.30.540.10:FF:000012">
    <property type="entry name" value="Blast:Putative inositol monophosphatase 3"/>
    <property type="match status" value="1"/>
</dbReference>
<dbReference type="Gene3D" id="3.40.190.80">
    <property type="match status" value="1"/>
</dbReference>
<dbReference type="Gene3D" id="3.30.540.10">
    <property type="entry name" value="Fructose-1,6-Bisphosphatase, subunit A, domain 1"/>
    <property type="match status" value="1"/>
</dbReference>
<dbReference type="InterPro" id="IPR050725">
    <property type="entry name" value="CysQ/Inositol_MonoPase"/>
</dbReference>
<dbReference type="InterPro" id="IPR000760">
    <property type="entry name" value="Inositol_monophosphatase-like"/>
</dbReference>
<dbReference type="InterPro" id="IPR020550">
    <property type="entry name" value="Inositol_monophosphatase_CS"/>
</dbReference>
<dbReference type="PANTHER" id="PTHR43028">
    <property type="entry name" value="3'(2'),5'-BISPHOSPHATE NUCLEOTIDASE 1"/>
    <property type="match status" value="1"/>
</dbReference>
<dbReference type="PANTHER" id="PTHR43028:SF5">
    <property type="entry name" value="3'(2'),5'-BISPHOSPHATE NUCLEOTIDASE 1"/>
    <property type="match status" value="1"/>
</dbReference>
<dbReference type="Pfam" id="PF00459">
    <property type="entry name" value="Inositol_P"/>
    <property type="match status" value="1"/>
</dbReference>
<dbReference type="SUPFAM" id="SSF56655">
    <property type="entry name" value="Carbohydrate phosphatase"/>
    <property type="match status" value="1"/>
</dbReference>
<dbReference type="PROSITE" id="PS00630">
    <property type="entry name" value="IMP_2"/>
    <property type="match status" value="1"/>
</dbReference>
<name>BPNT1_DICDI</name>
<accession>Q869K3</accession>
<accession>Q553A6</accession>
<protein>
    <recommendedName>
        <fullName>3'(2'),5'-bisphosphate nucleotidase 1</fullName>
        <ecNumber evidence="2">3.1.3.7</ecNumber>
    </recommendedName>
    <alternativeName>
        <fullName>3'-phosphoadenosine 5'-phosphate phosphatase</fullName>
        <shortName>PAP phosphatase</shortName>
    </alternativeName>
    <alternativeName>
        <fullName>Bisphosphate 3'-nucleotidase 1</fullName>
        <shortName>BPntase 1</shortName>
    </alternativeName>
    <alternativeName>
        <fullName>Inositol-polyphosphate 1-phosphatase</fullName>
        <ecNumber evidence="2">3.1.3.57</ecNumber>
    </alternativeName>
</protein>